<dbReference type="EC" id="2.4.2.10" evidence="1"/>
<dbReference type="EMBL" id="CP000946">
    <property type="protein sequence ID" value="ACA75755.1"/>
    <property type="molecule type" value="Genomic_DNA"/>
</dbReference>
<dbReference type="RefSeq" id="WP_000806177.1">
    <property type="nucleotide sequence ID" value="NZ_MTFT01000034.1"/>
</dbReference>
<dbReference type="SMR" id="B1IYV8"/>
<dbReference type="GeneID" id="75202211"/>
<dbReference type="KEGG" id="ecl:EcolC_0069"/>
<dbReference type="HOGENOM" id="CLU_074878_0_1_6"/>
<dbReference type="UniPathway" id="UPA00070">
    <property type="reaction ID" value="UER00119"/>
</dbReference>
<dbReference type="GO" id="GO:0005737">
    <property type="term" value="C:cytoplasm"/>
    <property type="evidence" value="ECO:0007669"/>
    <property type="project" value="TreeGrafter"/>
</dbReference>
<dbReference type="GO" id="GO:0000287">
    <property type="term" value="F:magnesium ion binding"/>
    <property type="evidence" value="ECO:0007669"/>
    <property type="project" value="UniProtKB-UniRule"/>
</dbReference>
<dbReference type="GO" id="GO:0004588">
    <property type="term" value="F:orotate phosphoribosyltransferase activity"/>
    <property type="evidence" value="ECO:0007669"/>
    <property type="project" value="UniProtKB-UniRule"/>
</dbReference>
<dbReference type="GO" id="GO:0006207">
    <property type="term" value="P:'de novo' pyrimidine nucleobase biosynthetic process"/>
    <property type="evidence" value="ECO:0007669"/>
    <property type="project" value="TreeGrafter"/>
</dbReference>
<dbReference type="GO" id="GO:0044205">
    <property type="term" value="P:'de novo' UMP biosynthetic process"/>
    <property type="evidence" value="ECO:0007669"/>
    <property type="project" value="UniProtKB-UniRule"/>
</dbReference>
<dbReference type="GO" id="GO:0046132">
    <property type="term" value="P:pyrimidine ribonucleoside biosynthetic process"/>
    <property type="evidence" value="ECO:0007669"/>
    <property type="project" value="TreeGrafter"/>
</dbReference>
<dbReference type="CDD" id="cd06223">
    <property type="entry name" value="PRTases_typeI"/>
    <property type="match status" value="1"/>
</dbReference>
<dbReference type="FunFam" id="3.40.50.2020:FF:000008">
    <property type="entry name" value="Orotate phosphoribosyltransferase"/>
    <property type="match status" value="1"/>
</dbReference>
<dbReference type="Gene3D" id="3.40.50.2020">
    <property type="match status" value="1"/>
</dbReference>
<dbReference type="HAMAP" id="MF_01208">
    <property type="entry name" value="PyrE"/>
    <property type="match status" value="1"/>
</dbReference>
<dbReference type="InterPro" id="IPR023031">
    <property type="entry name" value="OPRT"/>
</dbReference>
<dbReference type="InterPro" id="IPR004467">
    <property type="entry name" value="Or_phspho_trans_dom"/>
</dbReference>
<dbReference type="InterPro" id="IPR000836">
    <property type="entry name" value="PRibTrfase_dom"/>
</dbReference>
<dbReference type="InterPro" id="IPR029057">
    <property type="entry name" value="PRTase-like"/>
</dbReference>
<dbReference type="NCBIfam" id="TIGR00336">
    <property type="entry name" value="pyrE"/>
    <property type="match status" value="1"/>
</dbReference>
<dbReference type="PANTHER" id="PTHR46683">
    <property type="entry name" value="OROTATE PHOSPHORIBOSYLTRANSFERASE 1-RELATED"/>
    <property type="match status" value="1"/>
</dbReference>
<dbReference type="PANTHER" id="PTHR46683:SF1">
    <property type="entry name" value="OROTATE PHOSPHORIBOSYLTRANSFERASE 1-RELATED"/>
    <property type="match status" value="1"/>
</dbReference>
<dbReference type="Pfam" id="PF00156">
    <property type="entry name" value="Pribosyltran"/>
    <property type="match status" value="1"/>
</dbReference>
<dbReference type="SUPFAM" id="SSF53271">
    <property type="entry name" value="PRTase-like"/>
    <property type="match status" value="1"/>
</dbReference>
<dbReference type="PROSITE" id="PS00103">
    <property type="entry name" value="PUR_PYR_PR_TRANSFER"/>
    <property type="match status" value="1"/>
</dbReference>
<organism>
    <name type="scientific">Escherichia coli (strain ATCC 8739 / DSM 1576 / NBRC 3972 / NCIMB 8545 / WDCM 00012 / Crooks)</name>
    <dbReference type="NCBI Taxonomy" id="481805"/>
    <lineage>
        <taxon>Bacteria</taxon>
        <taxon>Pseudomonadati</taxon>
        <taxon>Pseudomonadota</taxon>
        <taxon>Gammaproteobacteria</taxon>
        <taxon>Enterobacterales</taxon>
        <taxon>Enterobacteriaceae</taxon>
        <taxon>Escherichia</taxon>
    </lineage>
</organism>
<feature type="chain" id="PRO_1000085545" description="Orotate phosphoribosyltransferase">
    <location>
        <begin position="1"/>
        <end position="213"/>
    </location>
</feature>
<feature type="binding site" description="in other chain" evidence="1">
    <location>
        <position position="26"/>
    </location>
    <ligand>
        <name>5-phospho-alpha-D-ribose 1-diphosphate</name>
        <dbReference type="ChEBI" id="CHEBI:58017"/>
        <note>ligand shared between dimeric partners</note>
    </ligand>
</feature>
<feature type="binding site" evidence="1">
    <location>
        <begin position="34"/>
        <end position="35"/>
    </location>
    <ligand>
        <name>orotate</name>
        <dbReference type="ChEBI" id="CHEBI:30839"/>
    </ligand>
</feature>
<feature type="binding site" description="in other chain" evidence="1">
    <location>
        <begin position="72"/>
        <end position="73"/>
    </location>
    <ligand>
        <name>5-phospho-alpha-D-ribose 1-diphosphate</name>
        <dbReference type="ChEBI" id="CHEBI:58017"/>
        <note>ligand shared between dimeric partners</note>
    </ligand>
</feature>
<feature type="binding site" evidence="1">
    <location>
        <position position="99"/>
    </location>
    <ligand>
        <name>5-phospho-alpha-D-ribose 1-diphosphate</name>
        <dbReference type="ChEBI" id="CHEBI:58017"/>
        <note>ligand shared between dimeric partners</note>
    </ligand>
</feature>
<feature type="binding site" description="in other chain" evidence="1">
    <location>
        <position position="100"/>
    </location>
    <ligand>
        <name>5-phospho-alpha-D-ribose 1-diphosphate</name>
        <dbReference type="ChEBI" id="CHEBI:58017"/>
        <note>ligand shared between dimeric partners</note>
    </ligand>
</feature>
<feature type="binding site" evidence="1">
    <location>
        <position position="103"/>
    </location>
    <ligand>
        <name>5-phospho-alpha-D-ribose 1-diphosphate</name>
        <dbReference type="ChEBI" id="CHEBI:58017"/>
        <note>ligand shared between dimeric partners</note>
    </ligand>
</feature>
<feature type="binding site" evidence="1">
    <location>
        <position position="105"/>
    </location>
    <ligand>
        <name>5-phospho-alpha-D-ribose 1-diphosphate</name>
        <dbReference type="ChEBI" id="CHEBI:58017"/>
        <note>ligand shared between dimeric partners</note>
    </ligand>
</feature>
<feature type="binding site" description="in other chain" evidence="1">
    <location>
        <begin position="124"/>
        <end position="132"/>
    </location>
    <ligand>
        <name>5-phospho-alpha-D-ribose 1-diphosphate</name>
        <dbReference type="ChEBI" id="CHEBI:58017"/>
        <note>ligand shared between dimeric partners</note>
    </ligand>
</feature>
<feature type="binding site" evidence="1">
    <location>
        <position position="128"/>
    </location>
    <ligand>
        <name>orotate</name>
        <dbReference type="ChEBI" id="CHEBI:30839"/>
    </ligand>
</feature>
<feature type="binding site" evidence="1">
    <location>
        <position position="156"/>
    </location>
    <ligand>
        <name>orotate</name>
        <dbReference type="ChEBI" id="CHEBI:30839"/>
    </ligand>
</feature>
<evidence type="ECO:0000255" key="1">
    <source>
        <dbReference type="HAMAP-Rule" id="MF_01208"/>
    </source>
</evidence>
<comment type="function">
    <text evidence="1">Catalyzes the transfer of a ribosyl phosphate group from 5-phosphoribose 1-diphosphate to orotate, leading to the formation of orotidine monophosphate (OMP).</text>
</comment>
<comment type="catalytic activity">
    <reaction evidence="1">
        <text>orotidine 5'-phosphate + diphosphate = orotate + 5-phospho-alpha-D-ribose 1-diphosphate</text>
        <dbReference type="Rhea" id="RHEA:10380"/>
        <dbReference type="ChEBI" id="CHEBI:30839"/>
        <dbReference type="ChEBI" id="CHEBI:33019"/>
        <dbReference type="ChEBI" id="CHEBI:57538"/>
        <dbReference type="ChEBI" id="CHEBI:58017"/>
        <dbReference type="EC" id="2.4.2.10"/>
    </reaction>
</comment>
<comment type="cofactor">
    <cofactor evidence="1">
        <name>Mg(2+)</name>
        <dbReference type="ChEBI" id="CHEBI:18420"/>
    </cofactor>
</comment>
<comment type="pathway">
    <text evidence="1">Pyrimidine metabolism; UMP biosynthesis via de novo pathway; UMP from orotate: step 1/2.</text>
</comment>
<comment type="subunit">
    <text evidence="1">Homodimer.</text>
</comment>
<comment type="similarity">
    <text evidence="1">Belongs to the purine/pyrimidine phosphoribosyltransferase family. PyrE subfamily.</text>
</comment>
<protein>
    <recommendedName>
        <fullName evidence="1">Orotate phosphoribosyltransferase</fullName>
        <shortName evidence="1">OPRT</shortName>
        <shortName evidence="1">OPRTase</shortName>
        <ecNumber evidence="1">2.4.2.10</ecNumber>
    </recommendedName>
</protein>
<reference key="1">
    <citation type="submission" date="2008-02" db="EMBL/GenBank/DDBJ databases">
        <title>Complete sequence of Escherichia coli C str. ATCC 8739.</title>
        <authorList>
            <person name="Copeland A."/>
            <person name="Lucas S."/>
            <person name="Lapidus A."/>
            <person name="Glavina del Rio T."/>
            <person name="Dalin E."/>
            <person name="Tice H."/>
            <person name="Bruce D."/>
            <person name="Goodwin L."/>
            <person name="Pitluck S."/>
            <person name="Kiss H."/>
            <person name="Brettin T."/>
            <person name="Detter J.C."/>
            <person name="Han C."/>
            <person name="Kuske C.R."/>
            <person name="Schmutz J."/>
            <person name="Larimer F."/>
            <person name="Land M."/>
            <person name="Hauser L."/>
            <person name="Kyrpides N."/>
            <person name="Mikhailova N."/>
            <person name="Ingram L."/>
            <person name="Richardson P."/>
        </authorList>
    </citation>
    <scope>NUCLEOTIDE SEQUENCE [LARGE SCALE GENOMIC DNA]</scope>
    <source>
        <strain>ATCC 8739 / DSM 1576 / NBRC 3972 / NCIMB 8545 / WDCM 00012 / Crooks</strain>
    </source>
</reference>
<accession>B1IYV8</accession>
<gene>
    <name evidence="1" type="primary">pyrE</name>
    <name type="ordered locus">EcolC_0069</name>
</gene>
<proteinExistence type="inferred from homology"/>
<keyword id="KW-0328">Glycosyltransferase</keyword>
<keyword id="KW-0460">Magnesium</keyword>
<keyword id="KW-0665">Pyrimidine biosynthesis</keyword>
<keyword id="KW-0808">Transferase</keyword>
<name>PYRE_ECOLC</name>
<sequence>MKPYQRQFIEFALSKQVLKFGEFTLKSGRKSPYFFNAGLFNTGRDLALLGRFYAEALVDSGIEFDLLFGPAYKGIPIATTTAVALAEHHDLDLPYCFNRKEAKDHGEGGNLVGSALQGRVMLVDDVITAGTAIRESMEIIQANGATLAGVLISLDRQERGRGEISAIQEVERDYNCKVISIITLKDLIAYLEEKPEMAEHLAAVKAYREEFGV</sequence>